<keyword id="KW-0227">DNA damage</keyword>
<keyword id="KW-0233">DNA recombination</keyword>
<keyword id="KW-0234">DNA repair</keyword>
<keyword id="KW-0479">Metal-binding</keyword>
<keyword id="KW-1185">Reference proteome</keyword>
<keyword id="KW-0862">Zinc</keyword>
<keyword id="KW-0863">Zinc-finger</keyword>
<gene>
    <name evidence="1" type="primary">recR</name>
    <name type="ordered locus">AZOSEA06380</name>
    <name type="ORF">ebA1200</name>
</gene>
<proteinExistence type="inferred from homology"/>
<accession>Q5P7F1</accession>
<comment type="function">
    <text evidence="1">May play a role in DNA repair. It seems to be involved in an RecBC-independent recombinational process of DNA repair. It may act with RecF and RecO.</text>
</comment>
<comment type="similarity">
    <text evidence="1">Belongs to the RecR family.</text>
</comment>
<protein>
    <recommendedName>
        <fullName evidence="1">Recombination protein RecR</fullName>
    </recommendedName>
</protein>
<reference key="1">
    <citation type="journal article" date="2005" name="Arch. Microbiol.">
        <title>The genome sequence of an anaerobic aromatic-degrading denitrifying bacterium, strain EbN1.</title>
        <authorList>
            <person name="Rabus R."/>
            <person name="Kube M."/>
            <person name="Heider J."/>
            <person name="Beck A."/>
            <person name="Heitmann K."/>
            <person name="Widdel F."/>
            <person name="Reinhardt R."/>
        </authorList>
    </citation>
    <scope>NUCLEOTIDE SEQUENCE [LARGE SCALE GENOMIC DNA]</scope>
    <source>
        <strain>DSM 19018 / LMG 30748 / EbN1</strain>
    </source>
</reference>
<organism>
    <name type="scientific">Aromatoleum aromaticum (strain DSM 19018 / LMG 30748 / EbN1)</name>
    <name type="common">Azoarcus sp. (strain EbN1)</name>
    <dbReference type="NCBI Taxonomy" id="76114"/>
    <lineage>
        <taxon>Bacteria</taxon>
        <taxon>Pseudomonadati</taxon>
        <taxon>Pseudomonadota</taxon>
        <taxon>Betaproteobacteria</taxon>
        <taxon>Rhodocyclales</taxon>
        <taxon>Rhodocyclaceae</taxon>
        <taxon>Aromatoleum</taxon>
    </lineage>
</organism>
<name>RECR_AROAE</name>
<evidence type="ECO:0000255" key="1">
    <source>
        <dbReference type="HAMAP-Rule" id="MF_00017"/>
    </source>
</evidence>
<dbReference type="EMBL" id="CR555306">
    <property type="protein sequence ID" value="CAI06760.1"/>
    <property type="molecule type" value="Genomic_DNA"/>
</dbReference>
<dbReference type="RefSeq" id="WP_011236489.1">
    <property type="nucleotide sequence ID" value="NC_006513.1"/>
</dbReference>
<dbReference type="SMR" id="Q5P7F1"/>
<dbReference type="STRING" id="76114.ebA1200"/>
<dbReference type="KEGG" id="eba:ebA1200"/>
<dbReference type="eggNOG" id="COG0353">
    <property type="taxonomic scope" value="Bacteria"/>
</dbReference>
<dbReference type="HOGENOM" id="CLU_060739_1_2_4"/>
<dbReference type="OrthoDB" id="9802672at2"/>
<dbReference type="Proteomes" id="UP000006552">
    <property type="component" value="Chromosome"/>
</dbReference>
<dbReference type="GO" id="GO:0003677">
    <property type="term" value="F:DNA binding"/>
    <property type="evidence" value="ECO:0007669"/>
    <property type="project" value="UniProtKB-UniRule"/>
</dbReference>
<dbReference type="GO" id="GO:0008270">
    <property type="term" value="F:zinc ion binding"/>
    <property type="evidence" value="ECO:0007669"/>
    <property type="project" value="UniProtKB-KW"/>
</dbReference>
<dbReference type="GO" id="GO:0006310">
    <property type="term" value="P:DNA recombination"/>
    <property type="evidence" value="ECO:0007669"/>
    <property type="project" value="UniProtKB-UniRule"/>
</dbReference>
<dbReference type="GO" id="GO:0006281">
    <property type="term" value="P:DNA repair"/>
    <property type="evidence" value="ECO:0007669"/>
    <property type="project" value="UniProtKB-UniRule"/>
</dbReference>
<dbReference type="CDD" id="cd01025">
    <property type="entry name" value="TOPRIM_recR"/>
    <property type="match status" value="1"/>
</dbReference>
<dbReference type="Gene3D" id="3.40.1360.10">
    <property type="match status" value="1"/>
</dbReference>
<dbReference type="Gene3D" id="1.10.8.420">
    <property type="entry name" value="RecR Domain 1"/>
    <property type="match status" value="1"/>
</dbReference>
<dbReference type="HAMAP" id="MF_00017">
    <property type="entry name" value="RecR"/>
    <property type="match status" value="1"/>
</dbReference>
<dbReference type="InterPro" id="IPR000093">
    <property type="entry name" value="DNA_Rcmb_RecR"/>
</dbReference>
<dbReference type="InterPro" id="IPR023627">
    <property type="entry name" value="Rcmb_RecR"/>
</dbReference>
<dbReference type="InterPro" id="IPR015967">
    <property type="entry name" value="Rcmb_RecR_Znf"/>
</dbReference>
<dbReference type="InterPro" id="IPR006171">
    <property type="entry name" value="TOPRIM_dom"/>
</dbReference>
<dbReference type="InterPro" id="IPR034137">
    <property type="entry name" value="TOPRIM_RecR"/>
</dbReference>
<dbReference type="NCBIfam" id="TIGR00615">
    <property type="entry name" value="recR"/>
    <property type="match status" value="1"/>
</dbReference>
<dbReference type="PANTHER" id="PTHR30446">
    <property type="entry name" value="RECOMBINATION PROTEIN RECR"/>
    <property type="match status" value="1"/>
</dbReference>
<dbReference type="PANTHER" id="PTHR30446:SF0">
    <property type="entry name" value="RECOMBINATION PROTEIN RECR"/>
    <property type="match status" value="1"/>
</dbReference>
<dbReference type="Pfam" id="PF21175">
    <property type="entry name" value="RecR_C"/>
    <property type="match status" value="1"/>
</dbReference>
<dbReference type="Pfam" id="PF21176">
    <property type="entry name" value="RecR_HhH"/>
    <property type="match status" value="1"/>
</dbReference>
<dbReference type="Pfam" id="PF02132">
    <property type="entry name" value="RecR_ZnF"/>
    <property type="match status" value="1"/>
</dbReference>
<dbReference type="Pfam" id="PF13662">
    <property type="entry name" value="Toprim_4"/>
    <property type="match status" value="1"/>
</dbReference>
<dbReference type="SMART" id="SM00493">
    <property type="entry name" value="TOPRIM"/>
    <property type="match status" value="1"/>
</dbReference>
<dbReference type="SUPFAM" id="SSF111304">
    <property type="entry name" value="Recombination protein RecR"/>
    <property type="match status" value="1"/>
</dbReference>
<dbReference type="PROSITE" id="PS50880">
    <property type="entry name" value="TOPRIM"/>
    <property type="match status" value="1"/>
</dbReference>
<sequence>MSPSSLDELIDALRGLPGVGPKSAQRMAYHLLQRDQRGAERLARALGNALAVLRHCERCNTFTETEICQRCASPQRDASLLCVVEMPADLAVIEQTHAYNGLYYVLMGRLSPLDGIGPRELKFDKLLARVADSTVQEVILATNFTNEGEATAHIVAELLAARGIRVSRLSRGVPVGGELEHTDTGTIAQALVERRPL</sequence>
<feature type="chain" id="PRO_0000190272" description="Recombination protein RecR">
    <location>
        <begin position="1"/>
        <end position="197"/>
    </location>
</feature>
<feature type="domain" description="Toprim" evidence="1">
    <location>
        <begin position="79"/>
        <end position="174"/>
    </location>
</feature>
<feature type="zinc finger region" description="C4-type" evidence="1">
    <location>
        <begin position="56"/>
        <end position="71"/>
    </location>
</feature>